<dbReference type="EMBL" id="BX936398">
    <property type="protein sequence ID" value="CAH19663.1"/>
    <property type="molecule type" value="Genomic_DNA"/>
</dbReference>
<dbReference type="RefSeq" id="WP_002209148.1">
    <property type="nucleotide sequence ID" value="NZ_CP009712.1"/>
</dbReference>
<dbReference type="SMR" id="Q66FB7"/>
<dbReference type="GeneID" id="57974236"/>
<dbReference type="KEGG" id="ypo:BZ17_2141"/>
<dbReference type="KEGG" id="yps:YPTB0423"/>
<dbReference type="PATRIC" id="fig|273123.14.peg.2269"/>
<dbReference type="Proteomes" id="UP000001011">
    <property type="component" value="Chromosome"/>
</dbReference>
<dbReference type="GO" id="GO:0032300">
    <property type="term" value="C:mismatch repair complex"/>
    <property type="evidence" value="ECO:0007669"/>
    <property type="project" value="InterPro"/>
</dbReference>
<dbReference type="GO" id="GO:0005524">
    <property type="term" value="F:ATP binding"/>
    <property type="evidence" value="ECO:0007669"/>
    <property type="project" value="InterPro"/>
</dbReference>
<dbReference type="GO" id="GO:0016887">
    <property type="term" value="F:ATP hydrolysis activity"/>
    <property type="evidence" value="ECO:0007669"/>
    <property type="project" value="InterPro"/>
</dbReference>
<dbReference type="GO" id="GO:0140664">
    <property type="term" value="F:ATP-dependent DNA damage sensor activity"/>
    <property type="evidence" value="ECO:0007669"/>
    <property type="project" value="InterPro"/>
</dbReference>
<dbReference type="GO" id="GO:0030983">
    <property type="term" value="F:mismatched DNA binding"/>
    <property type="evidence" value="ECO:0007669"/>
    <property type="project" value="InterPro"/>
</dbReference>
<dbReference type="GO" id="GO:0006298">
    <property type="term" value="P:mismatch repair"/>
    <property type="evidence" value="ECO:0007669"/>
    <property type="project" value="UniProtKB-UniRule"/>
</dbReference>
<dbReference type="CDD" id="cd16926">
    <property type="entry name" value="HATPase_MutL-MLH-PMS-like"/>
    <property type="match status" value="1"/>
</dbReference>
<dbReference type="CDD" id="cd03482">
    <property type="entry name" value="MutL_Trans_MutL"/>
    <property type="match status" value="1"/>
</dbReference>
<dbReference type="FunFam" id="3.30.230.10:FF:000013">
    <property type="entry name" value="DNA mismatch repair endonuclease MutL"/>
    <property type="match status" value="1"/>
</dbReference>
<dbReference type="FunFam" id="3.30.565.10:FF:000003">
    <property type="entry name" value="DNA mismatch repair endonuclease MutL"/>
    <property type="match status" value="1"/>
</dbReference>
<dbReference type="FunFam" id="3.30.1370.100:FF:000002">
    <property type="entry name" value="DNA mismatch repair protein MutL"/>
    <property type="match status" value="1"/>
</dbReference>
<dbReference type="Gene3D" id="3.30.230.10">
    <property type="match status" value="1"/>
</dbReference>
<dbReference type="Gene3D" id="3.30.565.10">
    <property type="entry name" value="Histidine kinase-like ATPase, C-terminal domain"/>
    <property type="match status" value="1"/>
</dbReference>
<dbReference type="Gene3D" id="3.30.1540.20">
    <property type="entry name" value="MutL, C-terminal domain, dimerisation subdomain"/>
    <property type="match status" value="1"/>
</dbReference>
<dbReference type="Gene3D" id="3.30.1370.100">
    <property type="entry name" value="MutL, C-terminal domain, regulatory subdomain"/>
    <property type="match status" value="1"/>
</dbReference>
<dbReference type="HAMAP" id="MF_00149">
    <property type="entry name" value="DNA_mis_repair"/>
    <property type="match status" value="1"/>
</dbReference>
<dbReference type="InterPro" id="IPR014762">
    <property type="entry name" value="DNA_mismatch_repair_CS"/>
</dbReference>
<dbReference type="InterPro" id="IPR020667">
    <property type="entry name" value="DNA_mismatch_repair_MutL"/>
</dbReference>
<dbReference type="InterPro" id="IPR013507">
    <property type="entry name" value="DNA_mismatch_S5_2-like"/>
</dbReference>
<dbReference type="InterPro" id="IPR036890">
    <property type="entry name" value="HATPase_C_sf"/>
</dbReference>
<dbReference type="InterPro" id="IPR002099">
    <property type="entry name" value="MutL/Mlh/PMS"/>
</dbReference>
<dbReference type="InterPro" id="IPR038973">
    <property type="entry name" value="MutL/Mlh/Pms-like"/>
</dbReference>
<dbReference type="InterPro" id="IPR014790">
    <property type="entry name" value="MutL_C"/>
</dbReference>
<dbReference type="InterPro" id="IPR042120">
    <property type="entry name" value="MutL_C_dimsub"/>
</dbReference>
<dbReference type="InterPro" id="IPR042121">
    <property type="entry name" value="MutL_C_regsub"/>
</dbReference>
<dbReference type="InterPro" id="IPR037198">
    <property type="entry name" value="MutL_C_sf"/>
</dbReference>
<dbReference type="InterPro" id="IPR020568">
    <property type="entry name" value="Ribosomal_Su5_D2-typ_SF"/>
</dbReference>
<dbReference type="InterPro" id="IPR014721">
    <property type="entry name" value="Ribsml_uS5_D2-typ_fold_subgr"/>
</dbReference>
<dbReference type="NCBIfam" id="TIGR00585">
    <property type="entry name" value="mutl"/>
    <property type="match status" value="1"/>
</dbReference>
<dbReference type="NCBIfam" id="NF000948">
    <property type="entry name" value="PRK00095.1-1"/>
    <property type="match status" value="1"/>
</dbReference>
<dbReference type="PANTHER" id="PTHR10073">
    <property type="entry name" value="DNA MISMATCH REPAIR PROTEIN MLH, PMS, MUTL"/>
    <property type="match status" value="1"/>
</dbReference>
<dbReference type="PANTHER" id="PTHR10073:SF12">
    <property type="entry name" value="DNA MISMATCH REPAIR PROTEIN MLH1"/>
    <property type="match status" value="1"/>
</dbReference>
<dbReference type="Pfam" id="PF01119">
    <property type="entry name" value="DNA_mis_repair"/>
    <property type="match status" value="1"/>
</dbReference>
<dbReference type="Pfam" id="PF13589">
    <property type="entry name" value="HATPase_c_3"/>
    <property type="match status" value="1"/>
</dbReference>
<dbReference type="Pfam" id="PF08676">
    <property type="entry name" value="MutL_C"/>
    <property type="match status" value="1"/>
</dbReference>
<dbReference type="SMART" id="SM01340">
    <property type="entry name" value="DNA_mis_repair"/>
    <property type="match status" value="1"/>
</dbReference>
<dbReference type="SMART" id="SM00853">
    <property type="entry name" value="MutL_C"/>
    <property type="match status" value="1"/>
</dbReference>
<dbReference type="SUPFAM" id="SSF55874">
    <property type="entry name" value="ATPase domain of HSP90 chaperone/DNA topoisomerase II/histidine kinase"/>
    <property type="match status" value="1"/>
</dbReference>
<dbReference type="SUPFAM" id="SSF118116">
    <property type="entry name" value="DNA mismatch repair protein MutL"/>
    <property type="match status" value="1"/>
</dbReference>
<dbReference type="SUPFAM" id="SSF54211">
    <property type="entry name" value="Ribosomal protein S5 domain 2-like"/>
    <property type="match status" value="1"/>
</dbReference>
<dbReference type="PROSITE" id="PS00058">
    <property type="entry name" value="DNA_MISMATCH_REPAIR_1"/>
    <property type="match status" value="1"/>
</dbReference>
<proteinExistence type="inferred from homology"/>
<evidence type="ECO:0000255" key="1">
    <source>
        <dbReference type="HAMAP-Rule" id="MF_00149"/>
    </source>
</evidence>
<evidence type="ECO:0000256" key="2">
    <source>
        <dbReference type="SAM" id="MobiDB-lite"/>
    </source>
</evidence>
<keyword id="KW-0227">DNA damage</keyword>
<keyword id="KW-0234">DNA repair</keyword>
<reference key="1">
    <citation type="journal article" date="2004" name="Proc. Natl. Acad. Sci. U.S.A.">
        <title>Insights into the evolution of Yersinia pestis through whole-genome comparison with Yersinia pseudotuberculosis.</title>
        <authorList>
            <person name="Chain P.S.G."/>
            <person name="Carniel E."/>
            <person name="Larimer F.W."/>
            <person name="Lamerdin J."/>
            <person name="Stoutland P.O."/>
            <person name="Regala W.M."/>
            <person name="Georgescu A.M."/>
            <person name="Vergez L.M."/>
            <person name="Land M.L."/>
            <person name="Motin V.L."/>
            <person name="Brubaker R.R."/>
            <person name="Fowler J."/>
            <person name="Hinnebusch J."/>
            <person name="Marceau M."/>
            <person name="Medigue C."/>
            <person name="Simonet M."/>
            <person name="Chenal-Francisque V."/>
            <person name="Souza B."/>
            <person name="Dacheux D."/>
            <person name="Elliott J.M."/>
            <person name="Derbise A."/>
            <person name="Hauser L.J."/>
            <person name="Garcia E."/>
        </authorList>
    </citation>
    <scope>NUCLEOTIDE SEQUENCE [LARGE SCALE GENOMIC DNA]</scope>
    <source>
        <strain>IP32953</strain>
    </source>
</reference>
<accession>Q66FB7</accession>
<gene>
    <name evidence="1" type="primary">mutL</name>
    <name type="ordered locus">YPTB0423</name>
</gene>
<sequence>MPIQILPPQLANQIAAGEVVERPASVVKELVENSLDAGATRIDIDIERGGAKLIRIRDNGCGISKDDLALALARHATSKISSLEDLEAILSMGFRGEALASISSVSRLILTSRTAEQSEAWQAYAEGRDMAVTIKPAAHPVGSTLEVLDLFYNTPARRKFMRTEKTEFGHIDEVVRRIALARFDVAINLNHNGKLIRQYRAAPDPAQHERRLASICGPAFLQHALAIAWQHGDLNIHGWVADPAASHTLSEMQYCYVNNRMMRDRLINHAIRQAYQDRLNDAQQPAYVLYLDIDPHQVDVNVHPAKHEVRFHQARLVHDFIYQAVTAVLQQTNAPILNISEEGEVDAPRWQQENRVAAGTNKYAQPEAAKSSAAEQAVARERSSARERAAPAYKEDHPYQKQQGELYRQLLQPSAAAKPATSPAAIPASSVSSPSIPVQRITQAEEPLHGDNYSFGRVLTVFPPCYALIEYQGGVALLSLAVAERWLKQAQLSPPEEGLRPQPLLIPLKITLDKNEIAACQNHEKLLITMGIELSVEQGRATLRAVSLPLRQQNLQKLIPELLGYLSQHEEISPDTLATWLARHLGSEHEVWNVSQAIQLLTEVERLCPQLVQSPPAGLLQPIDIKAALATLTHE</sequence>
<organism>
    <name type="scientific">Yersinia pseudotuberculosis serotype I (strain IP32953)</name>
    <dbReference type="NCBI Taxonomy" id="273123"/>
    <lineage>
        <taxon>Bacteria</taxon>
        <taxon>Pseudomonadati</taxon>
        <taxon>Pseudomonadota</taxon>
        <taxon>Gammaproteobacteria</taxon>
        <taxon>Enterobacterales</taxon>
        <taxon>Yersiniaceae</taxon>
        <taxon>Yersinia</taxon>
    </lineage>
</organism>
<comment type="function">
    <text evidence="1">This protein is involved in the repair of mismatches in DNA. It is required for dam-dependent methyl-directed DNA mismatch repair. May act as a 'molecular matchmaker', a protein that promotes the formation of a stable complex between two or more DNA-binding proteins in an ATP-dependent manner without itself being part of a final effector complex.</text>
</comment>
<comment type="similarity">
    <text evidence="1">Belongs to the DNA mismatch repair MutL/HexB family.</text>
</comment>
<name>MUTL_YERPS</name>
<protein>
    <recommendedName>
        <fullName evidence="1">DNA mismatch repair protein MutL</fullName>
    </recommendedName>
</protein>
<feature type="chain" id="PRO_1000010109" description="DNA mismatch repair protein MutL">
    <location>
        <begin position="1"/>
        <end position="635"/>
    </location>
</feature>
<feature type="region of interest" description="Disordered" evidence="2">
    <location>
        <begin position="359"/>
        <end position="399"/>
    </location>
</feature>
<feature type="compositionally biased region" description="Low complexity" evidence="2">
    <location>
        <begin position="364"/>
        <end position="377"/>
    </location>
</feature>
<feature type="compositionally biased region" description="Basic and acidic residues" evidence="2">
    <location>
        <begin position="378"/>
        <end position="399"/>
    </location>
</feature>